<accession>A8JAF2</accession>
<gene>
    <name evidence="5" type="primary">CFAP43</name>
    <name evidence="6" type="synonym">FAP43</name>
    <name evidence="6" type="ORF">CHLREDRAFT_193355</name>
</gene>
<comment type="function">
    <text evidence="1">Flagellar protein involved in flagellum axoneme organization and function.</text>
</comment>
<comment type="subcellular location">
    <subcellularLocation>
        <location evidence="4">Cell projection</location>
        <location evidence="4">Cilium</location>
        <location evidence="4">Flagellum</location>
    </subcellularLocation>
    <subcellularLocation>
        <location evidence="1">Cytoplasm</location>
        <location evidence="1">Cytoskeleton</location>
        <location evidence="1">Flagellum axoneme</location>
    </subcellularLocation>
</comment>
<comment type="similarity">
    <text evidence="5">Belongs to the CFAP43 family.</text>
</comment>
<reference key="1">
    <citation type="journal article" date="2007" name="Science">
        <title>The Chlamydomonas genome reveals the evolution of key animal and plant functions.</title>
        <authorList>
            <person name="Merchant S.S."/>
            <person name="Prochnik S.E."/>
            <person name="Vallon O."/>
            <person name="Harris E.H."/>
            <person name="Karpowicz S.J."/>
            <person name="Witman G.B."/>
            <person name="Terry A."/>
            <person name="Salamov A."/>
            <person name="Fritz-Laylin L.K."/>
            <person name="Marechal-Drouard L."/>
            <person name="Marshall W.F."/>
            <person name="Qu L.H."/>
            <person name="Nelson D.R."/>
            <person name="Sanderfoot A.A."/>
            <person name="Spalding M.H."/>
            <person name="Kapitonov V.V."/>
            <person name="Ren Q."/>
            <person name="Ferris P."/>
            <person name="Lindquist E."/>
            <person name="Shapiro H."/>
            <person name="Lucas S.M."/>
            <person name="Grimwood J."/>
            <person name="Schmutz J."/>
            <person name="Cardol P."/>
            <person name="Cerutti H."/>
            <person name="Chanfreau G."/>
            <person name="Chen C.L."/>
            <person name="Cognat V."/>
            <person name="Croft M.T."/>
            <person name="Dent R."/>
            <person name="Dutcher S."/>
            <person name="Fernandez E."/>
            <person name="Fukuzawa H."/>
            <person name="Gonzalez-Ballester D."/>
            <person name="Gonzalez-Halphen D."/>
            <person name="Hallmann A."/>
            <person name="Hanikenne M."/>
            <person name="Hippler M."/>
            <person name="Inwood W."/>
            <person name="Jabbari K."/>
            <person name="Kalanon M."/>
            <person name="Kuras R."/>
            <person name="Lefebvre P.A."/>
            <person name="Lemaire S.D."/>
            <person name="Lobanov A.V."/>
            <person name="Lohr M."/>
            <person name="Manuell A."/>
            <person name="Meier I."/>
            <person name="Mets L."/>
            <person name="Mittag M."/>
            <person name="Mittelmeier T."/>
            <person name="Moroney J.V."/>
            <person name="Moseley J."/>
            <person name="Napoli C."/>
            <person name="Nedelcu A.M."/>
            <person name="Niyogi K."/>
            <person name="Novoselov S.V."/>
            <person name="Paulsen I.T."/>
            <person name="Pazour G.J."/>
            <person name="Purton S."/>
            <person name="Ral J.P."/>
            <person name="Riano-Pachon D.M."/>
            <person name="Riekhof W."/>
            <person name="Rymarquis L."/>
            <person name="Schroda M."/>
            <person name="Stern D."/>
            <person name="Umen J."/>
            <person name="Willows R."/>
            <person name="Wilson N."/>
            <person name="Zimmer S.L."/>
            <person name="Allmer J."/>
            <person name="Balk J."/>
            <person name="Bisova K."/>
            <person name="Chen C.J."/>
            <person name="Elias M."/>
            <person name="Gendler K."/>
            <person name="Hauser C."/>
            <person name="Lamb M.R."/>
            <person name="Ledford H."/>
            <person name="Long J.C."/>
            <person name="Minagawa J."/>
            <person name="Page M.D."/>
            <person name="Pan J."/>
            <person name="Pootakham W."/>
            <person name="Roje S."/>
            <person name="Rose A."/>
            <person name="Stahlberg E."/>
            <person name="Terauchi A.M."/>
            <person name="Yang P."/>
            <person name="Ball S."/>
            <person name="Bowler C."/>
            <person name="Dieckmann C.L."/>
            <person name="Gladyshev V.N."/>
            <person name="Green P."/>
            <person name="Jorgensen R."/>
            <person name="Mayfield S."/>
            <person name="Mueller-Roeber B."/>
            <person name="Rajamani S."/>
            <person name="Sayre R.T."/>
            <person name="Brokstein P."/>
            <person name="Dubchak I."/>
            <person name="Goodstein D."/>
            <person name="Hornick L."/>
            <person name="Huang Y.W."/>
            <person name="Jhaveri J."/>
            <person name="Luo Y."/>
            <person name="Martinez D."/>
            <person name="Ngau W.C."/>
            <person name="Otillar B."/>
            <person name="Poliakov A."/>
            <person name="Porter A."/>
            <person name="Szajkowski L."/>
            <person name="Werner G."/>
            <person name="Zhou K."/>
            <person name="Grigoriev I.V."/>
            <person name="Rokhsar D.S."/>
            <person name="Grossman A.R."/>
        </authorList>
    </citation>
    <scope>NUCLEOTIDE SEQUENCE [LARGE SCALE GENOMIC DNA]</scope>
    <source>
        <strain>CC-503</strain>
    </source>
</reference>
<reference key="2">
    <citation type="journal article" date="2005" name="J. Cell Biol.">
        <title>Proteomic analysis of a eukaryotic cilium.</title>
        <authorList>
            <person name="Pazour G.J."/>
            <person name="Agrin N."/>
            <person name="Leszyk J."/>
            <person name="Witman G.B."/>
        </authorList>
    </citation>
    <scope>IDENTIFICATION BY MASS SPECTROMETRY</scope>
    <scope>SUBCELLULAR LOCATION</scope>
</reference>
<keyword id="KW-0966">Cell projection</keyword>
<keyword id="KW-0969">Cilium</keyword>
<keyword id="KW-0175">Coiled coil</keyword>
<keyword id="KW-0963">Cytoplasm</keyword>
<keyword id="KW-0206">Cytoskeleton</keyword>
<keyword id="KW-0282">Flagellum</keyword>
<keyword id="KW-0677">Repeat</keyword>
<keyword id="KW-0853">WD repeat</keyword>
<sequence>MSIQTRSAVGYSGGQVTWTGPDECAWTCGNAVVLHTLGSKAQRVLKGTGFGISCFAVNKRHGLLAIAEKGLKPMVTVYSTKTLQPLAKLLPGDVREEGAGGGADKPSGSGAVSGKQQSSGPSVVLGVTCLAFSNDGERLAVCGDEPDCSVIVYGWRKAEVLGRCRMPAAASSASSTSPASSVSFHPLDASVLATSGPGGACAVWFLEPLWEKAVFRPLQLAAGALPAGAEVTCHAWGPGGLYVGTSTGGLVLLDTATMAPLQLHAAAGGAAGEVAGGASGGASSPTPGASSGGAAGGSVVAVVPDAVTSGAAVTALTLNRDLVAVAGADGSVRVFVSVPAAAAAITPEPLALSHEVWLGRAGPARGVAVASAECGGADHATLLLGCPDGTMYRAPLAPKQGGGPTHSVLVVDCHVGRLAGVVPHPGGGAFLTTGSDGSVRVWSTTDGALLGRKQLSSAQTALAAAAPGASLAAVGSETGVVRVLVLPPASTAASAAASDAPLPALRVLFRQRLHSAPVDVLVFSPANDLLLSAGRDGIAWLCSVDARGGRVRPLGCLSLPPGERVLSATWPRSDGGSGAASGHAQAGPVSTTSAEGDEPSCLLSLAGGGLMCLTASAELHSGNWRNPYPDMVLLVTIKLLRLEVAMLAVAAVPGDRYGDAYGLGADKQLHKLVLPAEAAAWAGLRARPLRSAQHVPAHARASGGVAVAPGGHLLASGAADGTVALRNMSLITLAAQQGGDGAGAGLHDITAGGVVTVSFDATGRYLASAGADGALFVYELSKRAAVANRLATLRSRIADLLAANEAAPELERLTRNDMIVDVGLVEELQRETENRVAAVQAAVKKEHLRTELLAERVRRMVWDSMAVKGAVISGLRAPPGQHERVLKQVTMLRRVELAEQAALGVIPYGLIDFDVYCNTRKALQVQLLKQKMRDVQAGFNTDFNKVAAAKKADCDRIADLNARLDDTLKDLRKLGAGPPAGLLDERFSLSAQQDTRDNIAATVLMVREEEVGAERYVSPAERAKQEAARKADEDAAKRSAKDNAGERALRQMMGGTLAARGGGHDESNPFSLPKPAWLVALGVEPDAVNPKLITEEQNRELKEWQAKEKSLQEERAKRITVLEMELRTAKAAVEELTSEAVERGLLARLGAAKEAHGRAASELSERRAALAELESRQAQLGADERLMDRNFKKEFAEADIHLNRLLQLYRARKPEQLASMPGGGAIGAAGGHQSGVEASSGSFSRVPGGAPGLHRQASLAHSPSGAAAAGGEAAGAATAAGGAGSSGGAAPCGAAGNPSTGPPANITPTYTHALPLPHAAVAATTLNPFPDAPPGASGHDRPGSSALHPSHSHASVHGNHAHHHLSAAAAAAGHSDPLHNLSGLKPEGLDAALWDRFVAYRAERLAAEAGARAAAGDLVLARRDLPELESREAALGSEMEVLMGSITALRSERKVAAYDNEVQLRLLAGQVEAMPPRPASADMSDARLLGRGVVESLNSVVLGKGTKKVELLTAMKDFKRGIYAAQWEAQAADMRLDDLRAKIRDLQLLHVTRDMQTVLKDGEDRSSALEAANLEALMKQRERLHAKALEDKRRRLRKLAADVSSRSAQNQEVAVHLVTLGKVLEEQQRLQAGMQSANDQATRRMRSLVTHKKLKEIALAQQNELGELRQQLEKLRLRTYPTFIESGAVAGMPSPPRRLPPDIKLLAGSPSSSSVAGRT</sequence>
<evidence type="ECO:0000250" key="1">
    <source>
        <dbReference type="UniProtKB" id="Q57WH1"/>
    </source>
</evidence>
<evidence type="ECO:0000255" key="2"/>
<evidence type="ECO:0000256" key="3">
    <source>
        <dbReference type="SAM" id="MobiDB-lite"/>
    </source>
</evidence>
<evidence type="ECO:0000269" key="4">
    <source>
    </source>
</evidence>
<evidence type="ECO:0000305" key="5"/>
<evidence type="ECO:0000312" key="6">
    <source>
        <dbReference type="EMBL" id="EDO99120.1"/>
    </source>
</evidence>
<dbReference type="EMBL" id="DS496149">
    <property type="protein sequence ID" value="EDO99120.1"/>
    <property type="molecule type" value="Genomic_DNA"/>
</dbReference>
<dbReference type="RefSeq" id="XP_001698838.1">
    <property type="nucleotide sequence ID" value="XM_001698786.1"/>
</dbReference>
<dbReference type="SMR" id="A8JAF2"/>
<dbReference type="PaxDb" id="3055-EDO99120"/>
<dbReference type="eggNOG" id="ENOG502QQ39">
    <property type="taxonomic scope" value="Eukaryota"/>
</dbReference>
<dbReference type="HOGENOM" id="CLU_000937_1_0_1"/>
<dbReference type="GO" id="GO:0005930">
    <property type="term" value="C:axoneme"/>
    <property type="evidence" value="ECO:0000250"/>
    <property type="project" value="UniProtKB"/>
</dbReference>
<dbReference type="GO" id="GO:0031514">
    <property type="term" value="C:motile cilium"/>
    <property type="evidence" value="ECO:0007669"/>
    <property type="project" value="UniProtKB-SubCell"/>
</dbReference>
<dbReference type="FunFam" id="2.130.10.10:FF:003225">
    <property type="entry name" value="Cilia- and flagella-associated protein 43"/>
    <property type="match status" value="1"/>
</dbReference>
<dbReference type="Gene3D" id="2.130.10.10">
    <property type="entry name" value="YVTN repeat-like/Quinoprotein amine dehydrogenase"/>
    <property type="match status" value="3"/>
</dbReference>
<dbReference type="InterPro" id="IPR011044">
    <property type="entry name" value="Quino_amine_DH_bsu"/>
</dbReference>
<dbReference type="InterPro" id="IPR015943">
    <property type="entry name" value="WD40/YVTN_repeat-like_dom_sf"/>
</dbReference>
<dbReference type="InterPro" id="IPR036322">
    <property type="entry name" value="WD40_repeat_dom_sf"/>
</dbReference>
<dbReference type="InterPro" id="IPR001680">
    <property type="entry name" value="WD40_rpt"/>
</dbReference>
<dbReference type="PANTHER" id="PTHR14885:SF1">
    <property type="entry name" value="CILIA- AND FLAGELLA-ASSOCIATED PROTEIN 43"/>
    <property type="match status" value="1"/>
</dbReference>
<dbReference type="PANTHER" id="PTHR14885">
    <property type="entry name" value="CILIA- AND FLAGELLA-ASSOCIATED PROTEIN 43-RELATED"/>
    <property type="match status" value="1"/>
</dbReference>
<dbReference type="Pfam" id="PF00400">
    <property type="entry name" value="WD40"/>
    <property type="match status" value="3"/>
</dbReference>
<dbReference type="SMART" id="SM00320">
    <property type="entry name" value="WD40"/>
    <property type="match status" value="7"/>
</dbReference>
<dbReference type="SUPFAM" id="SSF50978">
    <property type="entry name" value="WD40 repeat-like"/>
    <property type="match status" value="1"/>
</dbReference>
<dbReference type="SUPFAM" id="SSF50969">
    <property type="entry name" value="YVTN repeat-like/Quinoprotein amine dehydrogenase"/>
    <property type="match status" value="1"/>
</dbReference>
<dbReference type="PROSITE" id="PS50082">
    <property type="entry name" value="WD_REPEATS_2"/>
    <property type="match status" value="1"/>
</dbReference>
<dbReference type="PROSITE" id="PS50294">
    <property type="entry name" value="WD_REPEATS_REGION"/>
    <property type="match status" value="2"/>
</dbReference>
<name>CFA43_CHLRE</name>
<protein>
    <recommendedName>
        <fullName evidence="5">Cilia- and flagella-associated protein 43</fullName>
    </recommendedName>
</protein>
<proteinExistence type="evidence at protein level"/>
<feature type="chain" id="PRO_0000431299" description="Cilia- and flagella-associated protein 43">
    <location>
        <begin position="1"/>
        <end position="1719"/>
    </location>
</feature>
<feature type="repeat" description="WD 1" evidence="2">
    <location>
        <begin position="122"/>
        <end position="165"/>
    </location>
</feature>
<feature type="repeat" description="WD 2" evidence="2">
    <location>
        <begin position="174"/>
        <end position="214"/>
    </location>
</feature>
<feature type="repeat" description="WD 3" evidence="2">
    <location>
        <begin position="226"/>
        <end position="263"/>
    </location>
</feature>
<feature type="repeat" description="WD 4" evidence="2">
    <location>
        <begin position="308"/>
        <end position="345"/>
    </location>
</feature>
<feature type="repeat" description="WD 5" evidence="2">
    <location>
        <begin position="413"/>
        <end position="452"/>
    </location>
</feature>
<feature type="repeat" description="WD 6" evidence="2">
    <location>
        <begin position="513"/>
        <end position="552"/>
    </location>
</feature>
<feature type="repeat" description="WD 7" evidence="2">
    <location>
        <begin position="697"/>
        <end position="736"/>
    </location>
</feature>
<feature type="repeat" description="WD 8" evidence="2">
    <location>
        <begin position="749"/>
        <end position="788"/>
    </location>
</feature>
<feature type="repeat" description="WD 9" evidence="2">
    <location>
        <begin position="1073"/>
        <end position="1114"/>
    </location>
</feature>
<feature type="region of interest" description="Disordered" evidence="3">
    <location>
        <begin position="94"/>
        <end position="120"/>
    </location>
</feature>
<feature type="region of interest" description="Disordered" evidence="3">
    <location>
        <begin position="569"/>
        <end position="596"/>
    </location>
</feature>
<feature type="region of interest" description="Disordered" evidence="3">
    <location>
        <begin position="1022"/>
        <end position="1045"/>
    </location>
</feature>
<feature type="region of interest" description="Disordered" evidence="3">
    <location>
        <begin position="1220"/>
        <end position="1269"/>
    </location>
</feature>
<feature type="region of interest" description="Disordered" evidence="3">
    <location>
        <begin position="1277"/>
        <end position="1296"/>
    </location>
</feature>
<feature type="region of interest" description="Disordered" evidence="3">
    <location>
        <begin position="1325"/>
        <end position="1372"/>
    </location>
</feature>
<feature type="region of interest" description="Disordered" evidence="3">
    <location>
        <begin position="1685"/>
        <end position="1719"/>
    </location>
</feature>
<feature type="coiled-coil region" evidence="2">
    <location>
        <begin position="1524"/>
        <end position="1609"/>
    </location>
</feature>
<feature type="coiled-coil region" evidence="2">
    <location>
        <begin position="1651"/>
        <end position="1679"/>
    </location>
</feature>
<feature type="compositionally biased region" description="Gly residues" evidence="3">
    <location>
        <begin position="1221"/>
        <end position="1233"/>
    </location>
</feature>
<feature type="compositionally biased region" description="Low complexity" evidence="3">
    <location>
        <begin position="1257"/>
        <end position="1269"/>
    </location>
</feature>
<feature type="compositionally biased region" description="Low complexity" evidence="3">
    <location>
        <begin position="1344"/>
        <end position="1358"/>
    </location>
</feature>
<feature type="compositionally biased region" description="Polar residues" evidence="3">
    <location>
        <begin position="1709"/>
        <end position="1719"/>
    </location>
</feature>
<organism>
    <name type="scientific">Chlamydomonas reinhardtii</name>
    <name type="common">Chlamydomonas smithii</name>
    <dbReference type="NCBI Taxonomy" id="3055"/>
    <lineage>
        <taxon>Eukaryota</taxon>
        <taxon>Viridiplantae</taxon>
        <taxon>Chlorophyta</taxon>
        <taxon>core chlorophytes</taxon>
        <taxon>Chlorophyceae</taxon>
        <taxon>CS clade</taxon>
        <taxon>Chlamydomonadales</taxon>
        <taxon>Chlamydomonadaceae</taxon>
        <taxon>Chlamydomonas</taxon>
    </lineage>
</organism>